<dbReference type="EC" id="4.2.1.33" evidence="9"/>
<dbReference type="EC" id="4.2.1.170" evidence="2"/>
<dbReference type="EMBL" id="AL163527">
    <property type="protein sequence ID" value="CAB86927.1"/>
    <property type="molecule type" value="Genomic_DNA"/>
</dbReference>
<dbReference type="EMBL" id="CP002686">
    <property type="protein sequence ID" value="AEE79857.1"/>
    <property type="molecule type" value="Genomic_DNA"/>
</dbReference>
<dbReference type="EMBL" id="AY065366">
    <property type="protein sequence ID" value="AAL38807.1"/>
    <property type="molecule type" value="mRNA"/>
</dbReference>
<dbReference type="EMBL" id="BT006060">
    <property type="protein sequence ID" value="AAP04045.1"/>
    <property type="molecule type" value="mRNA"/>
</dbReference>
<dbReference type="PIR" id="T47781">
    <property type="entry name" value="T47781"/>
</dbReference>
<dbReference type="RefSeq" id="NP_191458.1">
    <property type="nucleotide sequence ID" value="NM_115761.3"/>
</dbReference>
<dbReference type="SMR" id="Q9LYT7"/>
<dbReference type="FunCoup" id="Q9LYT7">
    <property type="interactions" value="85"/>
</dbReference>
<dbReference type="STRING" id="3702.Q9LYT7"/>
<dbReference type="PaxDb" id="3702-AT3G58990.1"/>
<dbReference type="ProteomicsDB" id="238656"/>
<dbReference type="EnsemblPlants" id="AT3G58990.1">
    <property type="protein sequence ID" value="AT3G58990.1"/>
    <property type="gene ID" value="AT3G58990"/>
</dbReference>
<dbReference type="GeneID" id="825068"/>
<dbReference type="Gramene" id="AT3G58990.1">
    <property type="protein sequence ID" value="AT3G58990.1"/>
    <property type="gene ID" value="AT3G58990"/>
</dbReference>
<dbReference type="KEGG" id="ath:AT3G58990"/>
<dbReference type="Araport" id="AT3G58990"/>
<dbReference type="TAIR" id="AT3G58990">
    <property type="gene designation" value="IPMI1"/>
</dbReference>
<dbReference type="eggNOG" id="KOG0454">
    <property type="taxonomic scope" value="Eukaryota"/>
</dbReference>
<dbReference type="HOGENOM" id="CLU_081378_1_0_1"/>
<dbReference type="InParanoid" id="Q9LYT7"/>
<dbReference type="OMA" id="PKFYNER"/>
<dbReference type="OrthoDB" id="10262323at2759"/>
<dbReference type="PhylomeDB" id="Q9LYT7"/>
<dbReference type="BioCyc" id="ARA:AT3G58990-MONOMER"/>
<dbReference type="BRENDA" id="4.2.1.170">
    <property type="organism ID" value="399"/>
</dbReference>
<dbReference type="BRENDA" id="4.2.1.33">
    <property type="organism ID" value="399"/>
</dbReference>
<dbReference type="UniPathway" id="UPA00048">
    <property type="reaction ID" value="UER00071"/>
</dbReference>
<dbReference type="PRO" id="PR:Q9LYT7"/>
<dbReference type="Proteomes" id="UP000006548">
    <property type="component" value="Chromosome 3"/>
</dbReference>
<dbReference type="ExpressionAtlas" id="Q9LYT7">
    <property type="expression patterns" value="baseline and differential"/>
</dbReference>
<dbReference type="GO" id="GO:0009507">
    <property type="term" value="C:chloroplast"/>
    <property type="evidence" value="ECO:0007005"/>
    <property type="project" value="TAIR"/>
</dbReference>
<dbReference type="GO" id="GO:0009570">
    <property type="term" value="C:chloroplast stroma"/>
    <property type="evidence" value="ECO:0000314"/>
    <property type="project" value="UniProtKB"/>
</dbReference>
<dbReference type="GO" id="GO:0009536">
    <property type="term" value="C:plastid"/>
    <property type="evidence" value="ECO:0000314"/>
    <property type="project" value="TAIR"/>
</dbReference>
<dbReference type="GO" id="GO:0120528">
    <property type="term" value="F:2-(omega-methylthio)alkylmalate dehydratase activity"/>
    <property type="evidence" value="ECO:0007669"/>
    <property type="project" value="UniProtKB-EC"/>
</dbReference>
<dbReference type="GO" id="GO:0003861">
    <property type="term" value="F:3-isopropylmalate dehydratase activity"/>
    <property type="evidence" value="ECO:0000314"/>
    <property type="project" value="UniProtKB"/>
</dbReference>
<dbReference type="GO" id="GO:0019761">
    <property type="term" value="P:glucosinolate biosynthetic process"/>
    <property type="evidence" value="ECO:0000315"/>
    <property type="project" value="UniProtKB"/>
</dbReference>
<dbReference type="GO" id="GO:0009098">
    <property type="term" value="P:L-leucine biosynthetic process"/>
    <property type="evidence" value="ECO:0007669"/>
    <property type="project" value="UniProtKB-UniPathway"/>
</dbReference>
<dbReference type="FunFam" id="3.20.19.10:FF:000007">
    <property type="entry name" value="Isopropylmalate/citramalate isomerase small subunit"/>
    <property type="match status" value="1"/>
</dbReference>
<dbReference type="Gene3D" id="3.20.19.10">
    <property type="entry name" value="Aconitase, domain 4"/>
    <property type="match status" value="1"/>
</dbReference>
<dbReference type="InterPro" id="IPR015928">
    <property type="entry name" value="Aconitase/3IPM_dehydase_swvl"/>
</dbReference>
<dbReference type="InterPro" id="IPR000573">
    <property type="entry name" value="AconitaseA/IPMdHydase_ssu_swvl"/>
</dbReference>
<dbReference type="InterPro" id="IPR050075">
    <property type="entry name" value="LeuD"/>
</dbReference>
<dbReference type="PANTHER" id="PTHR43345">
    <property type="entry name" value="3-ISOPROPYLMALATE DEHYDRATASE SMALL SUBUNIT 2-RELATED-RELATED"/>
    <property type="match status" value="1"/>
</dbReference>
<dbReference type="PANTHER" id="PTHR43345:SF8">
    <property type="entry name" value="3-ISOPROPYLMALATE DEHYDRATASE SMALL SUBUNIT 3"/>
    <property type="match status" value="1"/>
</dbReference>
<dbReference type="Pfam" id="PF00694">
    <property type="entry name" value="Aconitase_C"/>
    <property type="match status" value="1"/>
</dbReference>
<dbReference type="SUPFAM" id="SSF52016">
    <property type="entry name" value="LeuD/IlvD-like"/>
    <property type="match status" value="1"/>
</dbReference>
<keyword id="KW-0028">Amino-acid biosynthesis</keyword>
<keyword id="KW-0100">Branched-chain amino acid biosynthesis</keyword>
<keyword id="KW-0150">Chloroplast</keyword>
<keyword id="KW-0432">Leucine biosynthesis</keyword>
<keyword id="KW-0456">Lyase</keyword>
<keyword id="KW-0934">Plastid</keyword>
<keyword id="KW-1185">Reference proteome</keyword>
<keyword id="KW-0809">Transit peptide</keyword>
<feature type="transit peptide" description="Chloroplast" evidence="1">
    <location>
        <begin position="1"/>
        <end position="56"/>
    </location>
</feature>
<feature type="chain" id="PRO_0000425811" description="3-isopropylmalate dehydratase small subunit 3">
    <location>
        <begin position="57"/>
        <end position="253"/>
    </location>
</feature>
<accession>Q9LYT7</accession>
<gene>
    <name evidence="6" type="primary">SSU3</name>
    <name evidence="8" type="synonym">IPMI1</name>
    <name evidence="7" type="synonym">LEUD2</name>
    <name evidence="11" type="ordered locus">At3g58990</name>
    <name evidence="12" type="ORF">F17J16_40</name>
</gene>
<comment type="function">
    <text evidence="2 3 5 9 10">Catalyzes the isomerization between 2-isopropylmalate and 3-isopropylmalate, via the formation of 2-isopropylmaleate (Probable). Functions redundantly with LEUD1 in the methionine chain elongation pathway of aliphatic glucosinolate formation.</text>
</comment>
<comment type="catalytic activity">
    <reaction evidence="9">
        <text>(2R,3S)-3-isopropylmalate = (2S)-2-isopropylmalate</text>
        <dbReference type="Rhea" id="RHEA:32287"/>
        <dbReference type="ChEBI" id="CHEBI:1178"/>
        <dbReference type="ChEBI" id="CHEBI:35121"/>
        <dbReference type="EC" id="4.2.1.33"/>
    </reaction>
</comment>
<comment type="catalytic activity">
    <reaction evidence="2">
        <text>a 2-(omega-methylsulfanyl)alkylmalate = a 2-(omega-methylsulfanyl)alkylmaleate + H2O</text>
        <dbReference type="Rhea" id="RHEA:50632"/>
        <dbReference type="Rhea" id="RHEA-COMP:12824"/>
        <dbReference type="Rhea" id="RHEA-COMP:12826"/>
        <dbReference type="ChEBI" id="CHEBI:15377"/>
        <dbReference type="ChEBI" id="CHEBI:133494"/>
        <dbReference type="ChEBI" id="CHEBI:133498"/>
        <dbReference type="EC" id="4.2.1.170"/>
    </reaction>
</comment>
<comment type="catalytic activity">
    <reaction evidence="2">
        <text>2-(3-methylsulfanyl)propylmalate = 2-(2-methylsulfanyl)propylmaleate + H2O</text>
        <dbReference type="Rhea" id="RHEA:50652"/>
        <dbReference type="ChEBI" id="CHEBI:15377"/>
        <dbReference type="ChEBI" id="CHEBI:58817"/>
        <dbReference type="ChEBI" id="CHEBI:133500"/>
        <dbReference type="EC" id="4.2.1.170"/>
    </reaction>
</comment>
<comment type="catalytic activity">
    <reaction evidence="2">
        <text>a 3-(omega-methylsulfanyl)alkylmalate = a 2-(omega-methylsulfanyl)alkylmaleate + H2O</text>
        <dbReference type="Rhea" id="RHEA:50636"/>
        <dbReference type="Rhea" id="RHEA-COMP:12825"/>
        <dbReference type="Rhea" id="RHEA-COMP:12826"/>
        <dbReference type="ChEBI" id="CHEBI:15377"/>
        <dbReference type="ChEBI" id="CHEBI:133496"/>
        <dbReference type="ChEBI" id="CHEBI:133498"/>
        <dbReference type="EC" id="4.2.1.170"/>
    </reaction>
</comment>
<comment type="catalytic activity">
    <reaction evidence="2">
        <text>2-(2-methylsulfanyl)ethylmalate = 2-(2-methylsulfanyl)ethylmaleate + H2O</text>
        <dbReference type="Rhea" id="RHEA:50648"/>
        <dbReference type="ChEBI" id="CHEBI:15377"/>
        <dbReference type="ChEBI" id="CHEBI:58816"/>
        <dbReference type="ChEBI" id="CHEBI:133499"/>
        <dbReference type="EC" id="4.2.1.170"/>
    </reaction>
</comment>
<comment type="catalytic activity">
    <reaction evidence="2">
        <text>3-(2-methylsulfanyl)ethylmalate = 2-(2-methylsulfanyl)ethylmaleate + H2O</text>
        <dbReference type="Rhea" id="RHEA:50656"/>
        <dbReference type="ChEBI" id="CHEBI:15377"/>
        <dbReference type="ChEBI" id="CHEBI:133497"/>
        <dbReference type="ChEBI" id="CHEBI:133499"/>
        <dbReference type="EC" id="4.2.1.170"/>
    </reaction>
</comment>
<comment type="catalytic activity">
    <reaction evidence="2">
        <text>3-(3-methylsulfanyl)propylmalate = 2-(2-methylsulfanyl)propylmaleate + H2O</text>
        <dbReference type="Rhea" id="RHEA:50660"/>
        <dbReference type="ChEBI" id="CHEBI:15377"/>
        <dbReference type="ChEBI" id="CHEBI:133500"/>
        <dbReference type="ChEBI" id="CHEBI:133501"/>
        <dbReference type="EC" id="4.2.1.170"/>
    </reaction>
</comment>
<comment type="pathway">
    <text evidence="8">Amino-acid biosynthesis; L-leucine biosynthesis; L-leucine from 3-methyl-2-oxobutanoate: step 2/4.</text>
</comment>
<comment type="subunit">
    <text evidence="3">Heterodimer of the large LEUC/IIL1 subunit and the small LEUD (SSU1, SSU2 or SSU3) subunits.</text>
</comment>
<comment type="subcellular location">
    <subcellularLocation>
        <location evidence="3">Plastid</location>
        <location evidence="3">Chloroplast stroma</location>
    </subcellularLocation>
    <subcellularLocation>
        <location evidence="5">Plastid</location>
    </subcellularLocation>
</comment>
<comment type="tissue specificity">
    <text evidence="4 5">Expressed in vascular bundles of roots, cotyledons and rosette leaves (PubMed:24608865). Expressed in stem vascular bundles which branche off into lateral inflorescences (PubMed:24608865). Expressed in connective tissues in anthers (PubMed:24608865). In hypocotyls, expressed in parenchyma cells surrounding the vasculature (PubMed:32612621). In rosette leaves, expressed in phloem cells and cells close to the xylem along the vascular bundles (PubMed:32612621). In roots of adult plants, expressed in cells closely associated with the stele (PubMed:32612621). In flowering stalks, expressed in parenchyma cells associated with the phloem or the xylem (PubMed:32612621).</text>
</comment>
<comment type="disruption phenotype">
    <text evidence="2">No visible phenotype under normal growth conditions.</text>
</comment>
<comment type="similarity">
    <text evidence="8">Belongs to the LeuD family.</text>
</comment>
<reference key="1">
    <citation type="journal article" date="2000" name="Nature">
        <title>Sequence and analysis of chromosome 3 of the plant Arabidopsis thaliana.</title>
        <authorList>
            <person name="Salanoubat M."/>
            <person name="Lemcke K."/>
            <person name="Rieger M."/>
            <person name="Ansorge W."/>
            <person name="Unseld M."/>
            <person name="Fartmann B."/>
            <person name="Valle G."/>
            <person name="Bloecker H."/>
            <person name="Perez-Alonso M."/>
            <person name="Obermaier B."/>
            <person name="Delseny M."/>
            <person name="Boutry M."/>
            <person name="Grivell L.A."/>
            <person name="Mache R."/>
            <person name="Puigdomenech P."/>
            <person name="De Simone V."/>
            <person name="Choisne N."/>
            <person name="Artiguenave F."/>
            <person name="Robert C."/>
            <person name="Brottier P."/>
            <person name="Wincker P."/>
            <person name="Cattolico L."/>
            <person name="Weissenbach J."/>
            <person name="Saurin W."/>
            <person name="Quetier F."/>
            <person name="Schaefer M."/>
            <person name="Mueller-Auer S."/>
            <person name="Gabel C."/>
            <person name="Fuchs M."/>
            <person name="Benes V."/>
            <person name="Wurmbach E."/>
            <person name="Drzonek H."/>
            <person name="Erfle H."/>
            <person name="Jordan N."/>
            <person name="Bangert S."/>
            <person name="Wiedelmann R."/>
            <person name="Kranz H."/>
            <person name="Voss H."/>
            <person name="Holland R."/>
            <person name="Brandt P."/>
            <person name="Nyakatura G."/>
            <person name="Vezzi A."/>
            <person name="D'Angelo M."/>
            <person name="Pallavicini A."/>
            <person name="Toppo S."/>
            <person name="Simionati B."/>
            <person name="Conrad A."/>
            <person name="Hornischer K."/>
            <person name="Kauer G."/>
            <person name="Loehnert T.-H."/>
            <person name="Nordsiek G."/>
            <person name="Reichelt J."/>
            <person name="Scharfe M."/>
            <person name="Schoen O."/>
            <person name="Bargues M."/>
            <person name="Terol J."/>
            <person name="Climent J."/>
            <person name="Navarro P."/>
            <person name="Collado C."/>
            <person name="Perez-Perez A."/>
            <person name="Ottenwaelder B."/>
            <person name="Duchemin D."/>
            <person name="Cooke R."/>
            <person name="Laudie M."/>
            <person name="Berger-Llauro C."/>
            <person name="Purnelle B."/>
            <person name="Masuy D."/>
            <person name="de Haan M."/>
            <person name="Maarse A.C."/>
            <person name="Alcaraz J.-P."/>
            <person name="Cottet A."/>
            <person name="Casacuberta E."/>
            <person name="Monfort A."/>
            <person name="Argiriou A."/>
            <person name="Flores M."/>
            <person name="Liguori R."/>
            <person name="Vitale D."/>
            <person name="Mannhaupt G."/>
            <person name="Haase D."/>
            <person name="Schoof H."/>
            <person name="Rudd S."/>
            <person name="Zaccaria P."/>
            <person name="Mewes H.-W."/>
            <person name="Mayer K.F.X."/>
            <person name="Kaul S."/>
            <person name="Town C.D."/>
            <person name="Koo H.L."/>
            <person name="Tallon L.J."/>
            <person name="Jenkins J."/>
            <person name="Rooney T."/>
            <person name="Rizzo M."/>
            <person name="Walts A."/>
            <person name="Utterback T."/>
            <person name="Fujii C.Y."/>
            <person name="Shea T.P."/>
            <person name="Creasy T.H."/>
            <person name="Haas B."/>
            <person name="Maiti R."/>
            <person name="Wu D."/>
            <person name="Peterson J."/>
            <person name="Van Aken S."/>
            <person name="Pai G."/>
            <person name="Militscher J."/>
            <person name="Sellers P."/>
            <person name="Gill J.E."/>
            <person name="Feldblyum T.V."/>
            <person name="Preuss D."/>
            <person name="Lin X."/>
            <person name="Nierman W.C."/>
            <person name="Salzberg S.L."/>
            <person name="White O."/>
            <person name="Venter J.C."/>
            <person name="Fraser C.M."/>
            <person name="Kaneko T."/>
            <person name="Nakamura Y."/>
            <person name="Sato S."/>
            <person name="Kato T."/>
            <person name="Asamizu E."/>
            <person name="Sasamoto S."/>
            <person name="Kimura T."/>
            <person name="Idesawa K."/>
            <person name="Kawashima K."/>
            <person name="Kishida Y."/>
            <person name="Kiyokawa C."/>
            <person name="Kohara M."/>
            <person name="Matsumoto M."/>
            <person name="Matsuno A."/>
            <person name="Muraki A."/>
            <person name="Nakayama S."/>
            <person name="Nakazaki N."/>
            <person name="Shinpo S."/>
            <person name="Takeuchi C."/>
            <person name="Wada T."/>
            <person name="Watanabe A."/>
            <person name="Yamada M."/>
            <person name="Yasuda M."/>
            <person name="Tabata S."/>
        </authorList>
    </citation>
    <scope>NUCLEOTIDE SEQUENCE [LARGE SCALE GENOMIC DNA]</scope>
    <source>
        <strain>cv. Columbia</strain>
    </source>
</reference>
<reference key="2">
    <citation type="journal article" date="2017" name="Plant J.">
        <title>Araport11: a complete reannotation of the Arabidopsis thaliana reference genome.</title>
        <authorList>
            <person name="Cheng C.Y."/>
            <person name="Krishnakumar V."/>
            <person name="Chan A.P."/>
            <person name="Thibaud-Nissen F."/>
            <person name="Schobel S."/>
            <person name="Town C.D."/>
        </authorList>
    </citation>
    <scope>GENOME REANNOTATION</scope>
    <source>
        <strain>cv. Columbia</strain>
    </source>
</reference>
<reference key="3">
    <citation type="journal article" date="2003" name="Science">
        <title>Empirical analysis of transcriptional activity in the Arabidopsis genome.</title>
        <authorList>
            <person name="Yamada K."/>
            <person name="Lim J."/>
            <person name="Dale J.M."/>
            <person name="Chen H."/>
            <person name="Shinn P."/>
            <person name="Palm C.J."/>
            <person name="Southwick A.M."/>
            <person name="Wu H.C."/>
            <person name="Kim C.J."/>
            <person name="Nguyen M."/>
            <person name="Pham P.K."/>
            <person name="Cheuk R.F."/>
            <person name="Karlin-Newmann G."/>
            <person name="Liu S.X."/>
            <person name="Lam B."/>
            <person name="Sakano H."/>
            <person name="Wu T."/>
            <person name="Yu G."/>
            <person name="Miranda M."/>
            <person name="Quach H.L."/>
            <person name="Tripp M."/>
            <person name="Chang C.H."/>
            <person name="Lee J.M."/>
            <person name="Toriumi M.J."/>
            <person name="Chan M.M."/>
            <person name="Tang C.C."/>
            <person name="Onodera C.S."/>
            <person name="Deng J.M."/>
            <person name="Akiyama K."/>
            <person name="Ansari Y."/>
            <person name="Arakawa T."/>
            <person name="Banh J."/>
            <person name="Banno F."/>
            <person name="Bowser L."/>
            <person name="Brooks S.Y."/>
            <person name="Carninci P."/>
            <person name="Chao Q."/>
            <person name="Choy N."/>
            <person name="Enju A."/>
            <person name="Goldsmith A.D."/>
            <person name="Gurjal M."/>
            <person name="Hansen N.F."/>
            <person name="Hayashizaki Y."/>
            <person name="Johnson-Hopson C."/>
            <person name="Hsuan V.W."/>
            <person name="Iida K."/>
            <person name="Karnes M."/>
            <person name="Khan S."/>
            <person name="Koesema E."/>
            <person name="Ishida J."/>
            <person name="Jiang P.X."/>
            <person name="Jones T."/>
            <person name="Kawai J."/>
            <person name="Kamiya A."/>
            <person name="Meyers C."/>
            <person name="Nakajima M."/>
            <person name="Narusaka M."/>
            <person name="Seki M."/>
            <person name="Sakurai T."/>
            <person name="Satou M."/>
            <person name="Tamse R."/>
            <person name="Vaysberg M."/>
            <person name="Wallender E.K."/>
            <person name="Wong C."/>
            <person name="Yamamura Y."/>
            <person name="Yuan S."/>
            <person name="Shinozaki K."/>
            <person name="Davis R.W."/>
            <person name="Theologis A."/>
            <person name="Ecker J.R."/>
        </authorList>
    </citation>
    <scope>NUCLEOTIDE SEQUENCE [LARGE SCALE MRNA]</scope>
    <source>
        <strain>cv. Columbia</strain>
    </source>
</reference>
<reference key="4">
    <citation type="journal article" date="2009" name="Plant Mol. Biol.">
        <title>Arabidopsis thaliana encodes a bacterial-type heterodimeric isopropylmalate isomerase involved in both Leu biosynthesis and the Met chain elongation pathway of glucosinolate formation.</title>
        <authorList>
            <person name="Knill T."/>
            <person name="Reichelt M."/>
            <person name="Paetz C."/>
            <person name="Gershenzon J."/>
            <person name="Binder S."/>
        </authorList>
    </citation>
    <scope>FUNCTION</scope>
    <scope>CATALYTIC ACTIVITY</scope>
    <scope>DISRUPTION PHENOTYPE</scope>
</reference>
<reference key="5">
    <citation type="journal article" date="2010" name="Plant Cell Physiol.">
        <title>Functional specification of Arabidopsis isopropylmalate isomerases in glucosinolate and leucine biosynthesis.</title>
        <authorList>
            <person name="He Y."/>
            <person name="Chen B."/>
            <person name="Pang Q."/>
            <person name="Strul J.M."/>
            <person name="Chen S."/>
        </authorList>
    </citation>
    <scope>FUNCTION</scope>
    <scope>SUBUNIT</scope>
    <scope>SUBCELLULAR LOCATION</scope>
    <scope>TISSUE SPECIFICITY</scope>
</reference>
<reference key="6">
    <citation type="journal article" date="2014" name="PLoS ONE">
        <title>The small subunit 1 of the Arabidopsis isopropylmalate isomerase is required for normal growth and development and the early stages of glucosinolate formation.</title>
        <authorList>
            <person name="Imhof J."/>
            <person name="Huber F."/>
            <person name="Reichelt M."/>
            <person name="Gershenzon J."/>
            <person name="Wiegreffe C."/>
            <person name="Laechler K."/>
            <person name="Binder S."/>
        </authorList>
    </citation>
    <scope>TISSUE SPECIFICITY</scope>
</reference>
<reference key="7">
    <citation type="journal article" date="2020" name="Front. Plant Sci.">
        <title>In Arabidopsis thaliana substrate recognition and tissue- as well as plastid type-specific expression define the roles of distinct small subunits of isopropylmalate isomerase.</title>
        <authorList>
            <person name="Laechler K."/>
            <person name="Clauss K."/>
            <person name="Imhof J."/>
            <person name="Crocoll C."/>
            <person name="Schulz A."/>
            <person name="Halkier B.A."/>
            <person name="Binder S."/>
        </authorList>
    </citation>
    <scope>FUNCTION</scope>
    <scope>SUBCELLULAR LOCATION</scope>
    <scope>TISSUE SPECIFICITY</scope>
</reference>
<protein>
    <recommendedName>
        <fullName evidence="8">3-isopropylmalate dehydratase small subunit 3</fullName>
        <ecNumber evidence="9">4.2.1.33</ecNumber>
    </recommendedName>
    <alternativeName>
        <fullName evidence="8">2-(omega-methylthio)alkylmalate dehydratase small subunit 3</fullName>
        <ecNumber evidence="2">4.2.1.170</ecNumber>
    </alternativeName>
    <alternativeName>
        <fullName evidence="7">AtLEUD2</fullName>
    </alternativeName>
    <alternativeName>
        <fullName evidence="8">Isopropylmalate isomerase 1</fullName>
    </alternativeName>
    <alternativeName>
        <fullName evidence="6">Isopropylmalate isomerase small subunit 3</fullName>
        <shortName evidence="6">IPMI SSU3</shortName>
    </alternativeName>
    <alternativeName>
        <fullName evidence="8">Methylthioalkylmalate isomerase small subunit</fullName>
        <shortName evidence="8">MAM-IS</shortName>
    </alternativeName>
</protein>
<organism>
    <name type="scientific">Arabidopsis thaliana</name>
    <name type="common">Mouse-ear cress</name>
    <dbReference type="NCBI Taxonomy" id="3702"/>
    <lineage>
        <taxon>Eukaryota</taxon>
        <taxon>Viridiplantae</taxon>
        <taxon>Streptophyta</taxon>
        <taxon>Embryophyta</taxon>
        <taxon>Tracheophyta</taxon>
        <taxon>Spermatophyta</taxon>
        <taxon>Magnoliopsida</taxon>
        <taxon>eudicotyledons</taxon>
        <taxon>Gunneridae</taxon>
        <taxon>Pentapetalae</taxon>
        <taxon>rosids</taxon>
        <taxon>malvids</taxon>
        <taxon>Brassicales</taxon>
        <taxon>Brassicaceae</taxon>
        <taxon>Camelineae</taxon>
        <taxon>Arabidopsis</taxon>
    </lineage>
</organism>
<sequence>MATSQQFLNPTLFKSLASSNKNSCTLCPSPFLQLKSASTIFNYKPLTSSSATIITRVAASSSDSGESITRETFHGLCFVLKDNIDTDQIIPAEYGTLIPSIPEDREKLGSFALNGLPKFYNERFVVPGEMKSKYSVIIGGDNFGCGSSREHAPVCLGAAGAKAVVAESYARIFFRNCVATGEIFPLESEVRICDECKTGDVVTIEHKEDGSSLLINHTTRKEYKLKPLGDAGPVIDAGGIFAYARKAGMIPSA</sequence>
<name>LEUD2_ARATH</name>
<proteinExistence type="evidence at protein level"/>
<evidence type="ECO:0000255" key="1"/>
<evidence type="ECO:0000269" key="2">
    <source>
    </source>
</evidence>
<evidence type="ECO:0000269" key="3">
    <source>
    </source>
</evidence>
<evidence type="ECO:0000269" key="4">
    <source>
    </source>
</evidence>
<evidence type="ECO:0000269" key="5">
    <source>
    </source>
</evidence>
<evidence type="ECO:0000303" key="6">
    <source>
    </source>
</evidence>
<evidence type="ECO:0000303" key="7">
    <source>
    </source>
</evidence>
<evidence type="ECO:0000305" key="8"/>
<evidence type="ECO:0000305" key="9">
    <source>
    </source>
</evidence>
<evidence type="ECO:0000305" key="10">
    <source>
    </source>
</evidence>
<evidence type="ECO:0000312" key="11">
    <source>
        <dbReference type="Araport" id="AT3G58990"/>
    </source>
</evidence>
<evidence type="ECO:0000312" key="12">
    <source>
        <dbReference type="EMBL" id="CAB86927.1"/>
    </source>
</evidence>